<comment type="function">
    <text evidence="1">Catalyzes the hydrolysis of N-succinyl-L,L-diaminopimelic acid (SDAP), forming succinate and LL-2,6-diaminopimelate (DAP), an intermediate involved in the bacterial biosynthesis of lysine and meso-diaminopimelic acid, an essential component of bacterial cell walls.</text>
</comment>
<comment type="catalytic activity">
    <reaction evidence="1">
        <text>N-succinyl-(2S,6S)-2,6-diaminopimelate + H2O = (2S,6S)-2,6-diaminopimelate + succinate</text>
        <dbReference type="Rhea" id="RHEA:22608"/>
        <dbReference type="ChEBI" id="CHEBI:15377"/>
        <dbReference type="ChEBI" id="CHEBI:30031"/>
        <dbReference type="ChEBI" id="CHEBI:57609"/>
        <dbReference type="ChEBI" id="CHEBI:58087"/>
        <dbReference type="EC" id="3.5.1.18"/>
    </reaction>
</comment>
<comment type="cofactor">
    <cofactor evidence="1">
        <name>Zn(2+)</name>
        <dbReference type="ChEBI" id="CHEBI:29105"/>
    </cofactor>
    <cofactor evidence="1">
        <name>Co(2+)</name>
        <dbReference type="ChEBI" id="CHEBI:48828"/>
    </cofactor>
    <text evidence="1">Binds 2 Zn(2+) or Co(2+) ions per subunit.</text>
</comment>
<comment type="pathway">
    <text evidence="1">Amino-acid biosynthesis; L-lysine biosynthesis via DAP pathway; LL-2,6-diaminopimelate from (S)-tetrahydrodipicolinate (succinylase route): step 3/3.</text>
</comment>
<comment type="subunit">
    <text evidence="1">Homodimer.</text>
</comment>
<comment type="similarity">
    <text evidence="1">Belongs to the peptidase M20A family. DapE subfamily.</text>
</comment>
<protein>
    <recommendedName>
        <fullName evidence="1">Succinyl-diaminopimelate desuccinylase</fullName>
        <shortName evidence="1">SDAP desuccinylase</shortName>
        <ecNumber evidence="1">3.5.1.18</ecNumber>
    </recommendedName>
    <alternativeName>
        <fullName evidence="1">N-succinyl-LL-2,6-diaminoheptanedioate amidohydrolase</fullName>
    </alternativeName>
</protein>
<gene>
    <name evidence="1" type="primary">dapE</name>
    <name type="ordered locus">EcE24377A_2751</name>
</gene>
<evidence type="ECO:0000255" key="1">
    <source>
        <dbReference type="HAMAP-Rule" id="MF_01690"/>
    </source>
</evidence>
<keyword id="KW-0028">Amino-acid biosynthesis</keyword>
<keyword id="KW-0170">Cobalt</keyword>
<keyword id="KW-0220">Diaminopimelate biosynthesis</keyword>
<keyword id="KW-0378">Hydrolase</keyword>
<keyword id="KW-0457">Lysine biosynthesis</keyword>
<keyword id="KW-0479">Metal-binding</keyword>
<keyword id="KW-1185">Reference proteome</keyword>
<keyword id="KW-0862">Zinc</keyword>
<sequence length="375" mass="41269">MSCPVIELTQQLIRRPSLSPDDAGCQALLIERLQAIGFTVERMDFADTQNFWAWRGQGETLAFAGHTDVVPPGDADRWINPPFEPTIRDGMLFGRGAADMKGSLAAMVVAAERFVAQHPNHTGRLAFLITSDEEASAHNGTVKVVEALMARNERLDYCLVGEPSSIEVVGDVVKNGRRGSLTCNLTIHGVQGHVAYPHLADNPVHRAAPFLNELVAIEWDQGNEFFPATSMQIANIQAGTGSNNVIPGELFVQFNFRFSTELTDEMIKAQVLALLEKHQLRYTVDWWLSGQPFLTARGKLVDAVVNAVEHYNEIKPQLLTTGGTSDGRFIARMGAQVVELGPVNATIHKINECVNAADLQLLARMYQRIMEQLVA</sequence>
<dbReference type="EC" id="3.5.1.18" evidence="1"/>
<dbReference type="EMBL" id="CP000800">
    <property type="protein sequence ID" value="ABV20211.1"/>
    <property type="molecule type" value="Genomic_DNA"/>
</dbReference>
<dbReference type="RefSeq" id="WP_001277801.1">
    <property type="nucleotide sequence ID" value="NC_009801.1"/>
</dbReference>
<dbReference type="SMR" id="A7ZPR5"/>
<dbReference type="MEROPS" id="M20.010"/>
<dbReference type="KEGG" id="ecw:EcE24377A_2751"/>
<dbReference type="HOGENOM" id="CLU_021802_4_0_6"/>
<dbReference type="UniPathway" id="UPA00034">
    <property type="reaction ID" value="UER00021"/>
</dbReference>
<dbReference type="Proteomes" id="UP000001122">
    <property type="component" value="Chromosome"/>
</dbReference>
<dbReference type="GO" id="GO:0008777">
    <property type="term" value="F:acetylornithine deacetylase activity"/>
    <property type="evidence" value="ECO:0007669"/>
    <property type="project" value="TreeGrafter"/>
</dbReference>
<dbReference type="GO" id="GO:0050897">
    <property type="term" value="F:cobalt ion binding"/>
    <property type="evidence" value="ECO:0007669"/>
    <property type="project" value="UniProtKB-UniRule"/>
</dbReference>
<dbReference type="GO" id="GO:0009014">
    <property type="term" value="F:succinyl-diaminopimelate desuccinylase activity"/>
    <property type="evidence" value="ECO:0007669"/>
    <property type="project" value="UniProtKB-UniRule"/>
</dbReference>
<dbReference type="GO" id="GO:0008270">
    <property type="term" value="F:zinc ion binding"/>
    <property type="evidence" value="ECO:0007669"/>
    <property type="project" value="UniProtKB-UniRule"/>
</dbReference>
<dbReference type="GO" id="GO:0019877">
    <property type="term" value="P:diaminopimelate biosynthetic process"/>
    <property type="evidence" value="ECO:0007669"/>
    <property type="project" value="UniProtKB-UniRule"/>
</dbReference>
<dbReference type="GO" id="GO:0006526">
    <property type="term" value="P:L-arginine biosynthetic process"/>
    <property type="evidence" value="ECO:0007669"/>
    <property type="project" value="TreeGrafter"/>
</dbReference>
<dbReference type="GO" id="GO:0009089">
    <property type="term" value="P:lysine biosynthetic process via diaminopimelate"/>
    <property type="evidence" value="ECO:0007669"/>
    <property type="project" value="UniProtKB-UniRule"/>
</dbReference>
<dbReference type="CDD" id="cd03891">
    <property type="entry name" value="M20_DapE_proteobac"/>
    <property type="match status" value="1"/>
</dbReference>
<dbReference type="FunFam" id="3.30.70.360:FF:000011">
    <property type="entry name" value="Succinyl-diaminopimelate desuccinylase"/>
    <property type="match status" value="1"/>
</dbReference>
<dbReference type="FunFam" id="3.40.630.10:FF:000005">
    <property type="entry name" value="Succinyl-diaminopimelate desuccinylase"/>
    <property type="match status" value="1"/>
</dbReference>
<dbReference type="FunFam" id="3.40.630.10:FF:000010">
    <property type="entry name" value="Succinyl-diaminopimelate desuccinylase"/>
    <property type="match status" value="1"/>
</dbReference>
<dbReference type="Gene3D" id="3.40.630.10">
    <property type="entry name" value="Zn peptidases"/>
    <property type="match status" value="2"/>
</dbReference>
<dbReference type="HAMAP" id="MF_01690">
    <property type="entry name" value="DapE"/>
    <property type="match status" value="1"/>
</dbReference>
<dbReference type="InterPro" id="IPR001261">
    <property type="entry name" value="ArgE/DapE_CS"/>
</dbReference>
<dbReference type="InterPro" id="IPR036264">
    <property type="entry name" value="Bact_exopeptidase_dim_dom"/>
</dbReference>
<dbReference type="InterPro" id="IPR005941">
    <property type="entry name" value="DapE_proteobac"/>
</dbReference>
<dbReference type="InterPro" id="IPR002933">
    <property type="entry name" value="Peptidase_M20"/>
</dbReference>
<dbReference type="InterPro" id="IPR011650">
    <property type="entry name" value="Peptidase_M20_dimer"/>
</dbReference>
<dbReference type="InterPro" id="IPR050072">
    <property type="entry name" value="Peptidase_M20A"/>
</dbReference>
<dbReference type="NCBIfam" id="TIGR01246">
    <property type="entry name" value="dapE_proteo"/>
    <property type="match status" value="1"/>
</dbReference>
<dbReference type="NCBIfam" id="NF009557">
    <property type="entry name" value="PRK13009.1"/>
    <property type="match status" value="1"/>
</dbReference>
<dbReference type="PANTHER" id="PTHR43808">
    <property type="entry name" value="ACETYLORNITHINE DEACETYLASE"/>
    <property type="match status" value="1"/>
</dbReference>
<dbReference type="PANTHER" id="PTHR43808:SF31">
    <property type="entry name" value="N-ACETYL-L-CITRULLINE DEACETYLASE"/>
    <property type="match status" value="1"/>
</dbReference>
<dbReference type="Pfam" id="PF07687">
    <property type="entry name" value="M20_dimer"/>
    <property type="match status" value="1"/>
</dbReference>
<dbReference type="Pfam" id="PF01546">
    <property type="entry name" value="Peptidase_M20"/>
    <property type="match status" value="1"/>
</dbReference>
<dbReference type="SUPFAM" id="SSF55031">
    <property type="entry name" value="Bacterial exopeptidase dimerisation domain"/>
    <property type="match status" value="1"/>
</dbReference>
<dbReference type="SUPFAM" id="SSF53187">
    <property type="entry name" value="Zn-dependent exopeptidases"/>
    <property type="match status" value="1"/>
</dbReference>
<dbReference type="PROSITE" id="PS00758">
    <property type="entry name" value="ARGE_DAPE_CPG2_1"/>
    <property type="match status" value="1"/>
</dbReference>
<dbReference type="PROSITE" id="PS00759">
    <property type="entry name" value="ARGE_DAPE_CPG2_2"/>
    <property type="match status" value="1"/>
</dbReference>
<name>DAPE_ECO24</name>
<feature type="chain" id="PRO_0000375560" description="Succinyl-diaminopimelate desuccinylase">
    <location>
        <begin position="1"/>
        <end position="375"/>
    </location>
</feature>
<feature type="active site" evidence="1">
    <location>
        <position position="68"/>
    </location>
</feature>
<feature type="active site" description="Proton acceptor" evidence="1">
    <location>
        <position position="133"/>
    </location>
</feature>
<feature type="binding site" evidence="1">
    <location>
        <position position="66"/>
    </location>
    <ligand>
        <name>Zn(2+)</name>
        <dbReference type="ChEBI" id="CHEBI:29105"/>
        <label>1</label>
    </ligand>
</feature>
<feature type="binding site" evidence="1">
    <location>
        <position position="99"/>
    </location>
    <ligand>
        <name>Zn(2+)</name>
        <dbReference type="ChEBI" id="CHEBI:29105"/>
        <label>1</label>
    </ligand>
</feature>
<feature type="binding site" evidence="1">
    <location>
        <position position="99"/>
    </location>
    <ligand>
        <name>Zn(2+)</name>
        <dbReference type="ChEBI" id="CHEBI:29105"/>
        <label>2</label>
    </ligand>
</feature>
<feature type="binding site" evidence="1">
    <location>
        <position position="134"/>
    </location>
    <ligand>
        <name>Zn(2+)</name>
        <dbReference type="ChEBI" id="CHEBI:29105"/>
        <label>2</label>
    </ligand>
</feature>
<feature type="binding site" evidence="1">
    <location>
        <position position="162"/>
    </location>
    <ligand>
        <name>Zn(2+)</name>
        <dbReference type="ChEBI" id="CHEBI:29105"/>
        <label>1</label>
    </ligand>
</feature>
<feature type="binding site" evidence="1">
    <location>
        <position position="348"/>
    </location>
    <ligand>
        <name>Zn(2+)</name>
        <dbReference type="ChEBI" id="CHEBI:29105"/>
        <label>2</label>
    </ligand>
</feature>
<organism>
    <name type="scientific">Escherichia coli O139:H28 (strain E24377A / ETEC)</name>
    <dbReference type="NCBI Taxonomy" id="331111"/>
    <lineage>
        <taxon>Bacteria</taxon>
        <taxon>Pseudomonadati</taxon>
        <taxon>Pseudomonadota</taxon>
        <taxon>Gammaproteobacteria</taxon>
        <taxon>Enterobacterales</taxon>
        <taxon>Enterobacteriaceae</taxon>
        <taxon>Escherichia</taxon>
    </lineage>
</organism>
<accession>A7ZPR5</accession>
<proteinExistence type="inferred from homology"/>
<reference key="1">
    <citation type="journal article" date="2008" name="J. Bacteriol.">
        <title>The pangenome structure of Escherichia coli: comparative genomic analysis of E. coli commensal and pathogenic isolates.</title>
        <authorList>
            <person name="Rasko D.A."/>
            <person name="Rosovitz M.J."/>
            <person name="Myers G.S.A."/>
            <person name="Mongodin E.F."/>
            <person name="Fricke W.F."/>
            <person name="Gajer P."/>
            <person name="Crabtree J."/>
            <person name="Sebaihia M."/>
            <person name="Thomson N.R."/>
            <person name="Chaudhuri R."/>
            <person name="Henderson I.R."/>
            <person name="Sperandio V."/>
            <person name="Ravel J."/>
        </authorList>
    </citation>
    <scope>NUCLEOTIDE SEQUENCE [LARGE SCALE GENOMIC DNA]</scope>
    <source>
        <strain>E24377A / ETEC</strain>
    </source>
</reference>